<proteinExistence type="evidence at transcript level"/>
<reference key="1">
    <citation type="submission" date="2006-03" db="EMBL/GenBank/DDBJ databases">
        <authorList>
            <consortium name="NIH - Zebrafish Gene Collection (ZGC) project"/>
        </authorList>
    </citation>
    <scope>NUCLEOTIDE SEQUENCE [LARGE SCALE MRNA]</scope>
</reference>
<reference key="2">
    <citation type="journal article" date="1996" name="Mech. Dev.">
        <title>Teleost HoxD and HoxA genes: comparison with tetrapods and functional evolution of the HOXD complex.</title>
        <authorList>
            <person name="van der Hoeven F."/>
            <person name="Sordino P."/>
            <person name="Fraudeau N."/>
            <person name="Izpisua-Belmonte J.-C."/>
            <person name="Duboule D."/>
        </authorList>
    </citation>
    <scope>NUCLEOTIDE SEQUENCE [GENOMIC DNA] OF 14-276</scope>
    <scope>DEVELOPMENTAL STAGE</scope>
</reference>
<reference key="3">
    <citation type="journal article" date="2005" name="Evol. Dev.">
        <title>Genomic annotation and transcriptome analysis of the zebrafish (Danio rerio) hox complex with description of a novel member, hoxb13a.</title>
        <authorList>
            <person name="Corredor-Adamez M."/>
            <person name="Welten M.C.M."/>
            <person name="Spaink H.P."/>
            <person name="Jeffery J.E."/>
            <person name="Schoon R.T."/>
            <person name="de Bakker M.A.G."/>
            <person name="Bagowski C.P."/>
            <person name="Meijer A.H."/>
            <person name="Verbeek F.J."/>
            <person name="Richardson M.K."/>
        </authorList>
    </citation>
    <scope>NUCLEOTIDE SEQUENCE [MRNA] OF 109-210</scope>
    <source>
        <strain>Tuebingen</strain>
    </source>
</reference>
<reference key="4">
    <citation type="journal article" date="1998" name="Development">
        <title>Zebrafish hox genes: genomic organization and modified colinear expression patterns in the trunk.</title>
        <authorList>
            <person name="Prince V.E."/>
            <person name="Joly L."/>
            <person name="Ekker M."/>
            <person name="Ho R.K."/>
        </authorList>
    </citation>
    <scope>NUCLEOTIDE SEQUENCE [MRNA] OF 227-276</scope>
    <source>
        <tissue>Embryo</tissue>
    </source>
</reference>
<accession>Q90470</accession>
<accession>O57372</accession>
<accession>Q29RC6</accession>
<accession>Q4JMC9</accession>
<evidence type="ECO:0000250" key="1"/>
<evidence type="ECO:0000255" key="2">
    <source>
        <dbReference type="PROSITE-ProRule" id="PRU00108"/>
    </source>
</evidence>
<evidence type="ECO:0000256" key="3">
    <source>
        <dbReference type="SAM" id="MobiDB-lite"/>
    </source>
</evidence>
<evidence type="ECO:0000269" key="4">
    <source>
    </source>
</evidence>
<evidence type="ECO:0000305" key="5"/>
<sequence>MTDYDDRNNCASNMYLPYYVSTPDFSSVSSFLPQTTSCQVNFPYSSNIAQVQPVREVTFRDYGLDHPSKWHYRGNYASYYSTEEIMHRDLLQSTNRAEMIFKNDSMYSHHAGTNSSCSFFTNVGRNGVLPQGFDQFFETANSEKPNPEQSKQKPDTSVPGDAACNPSTDSAEQTKQDPTDTVEEESSVSTCDEEKNSGSSATKSRKKRCPYSKYQIRELEREFFFNVYINKEKRLQLSRMLSLTDRQVKIWFQNRRMKEKKLNRDRLQYFTGNPLF</sequence>
<organism>
    <name type="scientific">Danio rerio</name>
    <name type="common">Zebrafish</name>
    <name type="synonym">Brachydanio rerio</name>
    <dbReference type="NCBI Taxonomy" id="7955"/>
    <lineage>
        <taxon>Eukaryota</taxon>
        <taxon>Metazoa</taxon>
        <taxon>Chordata</taxon>
        <taxon>Craniata</taxon>
        <taxon>Vertebrata</taxon>
        <taxon>Euteleostomi</taxon>
        <taxon>Actinopterygii</taxon>
        <taxon>Neopterygii</taxon>
        <taxon>Teleostei</taxon>
        <taxon>Ostariophysi</taxon>
        <taxon>Cypriniformes</taxon>
        <taxon>Danionidae</taxon>
        <taxon>Danioninae</taxon>
        <taxon>Danio</taxon>
    </lineage>
</organism>
<dbReference type="EMBL" id="BC114271">
    <property type="protein sequence ID" value="AAI14272.1"/>
    <property type="status" value="ALT_INIT"/>
    <property type="molecule type" value="mRNA"/>
</dbReference>
<dbReference type="EMBL" id="X87751">
    <property type="protein sequence ID" value="CAA61030.1"/>
    <property type="molecule type" value="Genomic_DNA"/>
</dbReference>
<dbReference type="EMBL" id="DQ069272">
    <property type="protein sequence ID" value="AAY87054.1"/>
    <property type="molecule type" value="mRNA"/>
</dbReference>
<dbReference type="EMBL" id="Y14543">
    <property type="protein sequence ID" value="CAA74878.1"/>
    <property type="status" value="ALT_SEQ"/>
    <property type="molecule type" value="mRNA"/>
</dbReference>
<dbReference type="RefSeq" id="NP_571242.1">
    <property type="nucleotide sequence ID" value="NM_131167.1"/>
</dbReference>
<dbReference type="SMR" id="Q90470"/>
<dbReference type="STRING" id="7955.ENSDARP00000076780"/>
<dbReference type="PaxDb" id="7955-ENSDARP00000076780"/>
<dbReference type="DNASU" id="30405"/>
<dbReference type="Ensembl" id="ENSDART00000082344">
    <property type="protein sequence ID" value="ENSDARP00000076780"/>
    <property type="gene ID" value="ENSDARG00000059267"/>
</dbReference>
<dbReference type="GeneID" id="30405"/>
<dbReference type="KEGG" id="dre:30405"/>
<dbReference type="AGR" id="ZFIN:ZDB-GENE-990415-117"/>
<dbReference type="CTD" id="30405"/>
<dbReference type="ZFIN" id="ZDB-GENE-990415-117">
    <property type="gene designation" value="hoxd11a"/>
</dbReference>
<dbReference type="eggNOG" id="KOG0487">
    <property type="taxonomic scope" value="Eukaryota"/>
</dbReference>
<dbReference type="HOGENOM" id="CLU_079662_0_0_1"/>
<dbReference type="InParanoid" id="Q90470"/>
<dbReference type="OMA" id="CNFFTSV"/>
<dbReference type="OrthoDB" id="6159439at2759"/>
<dbReference type="PhylomeDB" id="Q90470"/>
<dbReference type="TreeFam" id="TF350668"/>
<dbReference type="PRO" id="PR:Q90470"/>
<dbReference type="Proteomes" id="UP000000437">
    <property type="component" value="Chromosome 9"/>
</dbReference>
<dbReference type="Bgee" id="ENSDARG00000059267">
    <property type="expression patterns" value="Expressed in presomitic mesoderm and 14 other cell types or tissues"/>
</dbReference>
<dbReference type="GO" id="GO:0005654">
    <property type="term" value="C:nucleoplasm"/>
    <property type="evidence" value="ECO:0007669"/>
    <property type="project" value="UniProtKB-ARBA"/>
</dbReference>
<dbReference type="GO" id="GO:0005634">
    <property type="term" value="C:nucleus"/>
    <property type="evidence" value="ECO:0000318"/>
    <property type="project" value="GO_Central"/>
</dbReference>
<dbReference type="GO" id="GO:0000981">
    <property type="term" value="F:DNA-binding transcription factor activity, RNA polymerase II-specific"/>
    <property type="evidence" value="ECO:0000318"/>
    <property type="project" value="GO_Central"/>
</dbReference>
<dbReference type="GO" id="GO:0000978">
    <property type="term" value="F:RNA polymerase II cis-regulatory region sequence-specific DNA binding"/>
    <property type="evidence" value="ECO:0000318"/>
    <property type="project" value="GO_Central"/>
</dbReference>
<dbReference type="GO" id="GO:0060272">
    <property type="term" value="P:embryonic skeletal joint morphogenesis"/>
    <property type="evidence" value="ECO:0000318"/>
    <property type="project" value="GO_Central"/>
</dbReference>
<dbReference type="GO" id="GO:0006357">
    <property type="term" value="P:regulation of transcription by RNA polymerase II"/>
    <property type="evidence" value="ECO:0000318"/>
    <property type="project" value="GO_Central"/>
</dbReference>
<dbReference type="CDD" id="cd00086">
    <property type="entry name" value="homeodomain"/>
    <property type="match status" value="1"/>
</dbReference>
<dbReference type="FunFam" id="1.10.10.60:FF:000166">
    <property type="entry name" value="homeobox protein Hox-C11"/>
    <property type="match status" value="1"/>
</dbReference>
<dbReference type="Gene3D" id="1.10.10.60">
    <property type="entry name" value="Homeodomain-like"/>
    <property type="match status" value="1"/>
</dbReference>
<dbReference type="InterPro" id="IPR021918">
    <property type="entry name" value="DUF3528"/>
</dbReference>
<dbReference type="InterPro" id="IPR001356">
    <property type="entry name" value="HD"/>
</dbReference>
<dbReference type="InterPro" id="IPR020479">
    <property type="entry name" value="HD_metazoa"/>
</dbReference>
<dbReference type="InterPro" id="IPR017970">
    <property type="entry name" value="Homeobox_CS"/>
</dbReference>
<dbReference type="InterPro" id="IPR009057">
    <property type="entry name" value="Homeodomain-like_sf"/>
</dbReference>
<dbReference type="PANTHER" id="PTHR46092">
    <property type="entry name" value="HOMEOBOX PROTEIN HOX-A11-RELATED"/>
    <property type="match status" value="1"/>
</dbReference>
<dbReference type="PANTHER" id="PTHR46092:SF2">
    <property type="entry name" value="HOMEOBOX PROTEIN HOX-D11"/>
    <property type="match status" value="1"/>
</dbReference>
<dbReference type="Pfam" id="PF12045">
    <property type="entry name" value="DUF3528"/>
    <property type="match status" value="1"/>
</dbReference>
<dbReference type="Pfam" id="PF00046">
    <property type="entry name" value="Homeodomain"/>
    <property type="match status" value="1"/>
</dbReference>
<dbReference type="PRINTS" id="PR00024">
    <property type="entry name" value="HOMEOBOX"/>
</dbReference>
<dbReference type="SMART" id="SM00389">
    <property type="entry name" value="HOX"/>
    <property type="match status" value="1"/>
</dbReference>
<dbReference type="SUPFAM" id="SSF46689">
    <property type="entry name" value="Homeodomain-like"/>
    <property type="match status" value="1"/>
</dbReference>
<dbReference type="PROSITE" id="PS00027">
    <property type="entry name" value="HOMEOBOX_1"/>
    <property type="match status" value="1"/>
</dbReference>
<dbReference type="PROSITE" id="PS50071">
    <property type="entry name" value="HOMEOBOX_2"/>
    <property type="match status" value="1"/>
</dbReference>
<protein>
    <recommendedName>
        <fullName>Homeobox protein Hox-D11a</fullName>
        <shortName>Hox-D11</shortName>
    </recommendedName>
    <alternativeName>
        <fullName>Homeobox protein Hox-C11</fullName>
    </alternativeName>
</protein>
<comment type="function">
    <text evidence="1">Sequence-specific transcription factor which is part of a developmental regulatory system that provides cells with specific positional identities on the anterior-posterior axis.</text>
</comment>
<comment type="subcellular location">
    <subcellularLocation>
        <location evidence="2">Nucleus</location>
    </subcellularLocation>
</comment>
<comment type="developmental stage">
    <text evidence="4">First expressed at 12 hours post-fertilization (hpf) in the dorsal pre-somitic mesoderm and neural keel at posterior levels, extending into the ventral somitic mesoderm during budding. At 22-26 hpf, expression decreases in the lateral and ventral mesoderm, but is maintained in the neural rod. Expression decreases from posterior to anterior with an anterior expression limit at somite 11. At 24-26 hpf, posterior expression begin to weaken and is undetectable by 40-56 hpf.</text>
</comment>
<comment type="similarity">
    <text evidence="5">Belongs to the Abd-B homeobox family.</text>
</comment>
<comment type="sequence caution" evidence="5">
    <conflict type="erroneous initiation">
        <sequence resource="EMBL-CDS" id="AAI14272"/>
    </conflict>
</comment>
<comment type="sequence caution" evidence="5">
    <conflict type="erroneous termination">
        <sequence resource="EMBL-CDS" id="CAA74878"/>
    </conflict>
    <text>Extended C-terminus.</text>
</comment>
<gene>
    <name type="primary">hoxd11a</name>
    <name type="synonym">hoxc11</name>
    <name type="synonym">hoxd11</name>
</gene>
<keyword id="KW-0217">Developmental protein</keyword>
<keyword id="KW-0238">DNA-binding</keyword>
<keyword id="KW-0371">Homeobox</keyword>
<keyword id="KW-0539">Nucleus</keyword>
<keyword id="KW-1185">Reference proteome</keyword>
<keyword id="KW-0804">Transcription</keyword>
<keyword id="KW-0805">Transcription regulation</keyword>
<name>HXDBA_DANRE</name>
<feature type="chain" id="PRO_0000200234" description="Homeobox protein Hox-D11a">
    <location>
        <begin position="1"/>
        <end position="276"/>
    </location>
</feature>
<feature type="DNA-binding region" description="Homeobox" evidence="2">
    <location>
        <begin position="204"/>
        <end position="263"/>
    </location>
</feature>
<feature type="region of interest" description="Disordered" evidence="3">
    <location>
        <begin position="139"/>
        <end position="207"/>
    </location>
</feature>
<feature type="compositionally biased region" description="Polar residues" evidence="3">
    <location>
        <begin position="139"/>
        <end position="149"/>
    </location>
</feature>
<feature type="sequence conflict" description="In Ref. 4." evidence="5" ref="4">
    <original>I</original>
    <variation>M</variation>
    <location>
        <position position="229"/>
    </location>
</feature>